<keyword id="KW-0027">Amidation</keyword>
<keyword id="KW-0903">Direct protein sequencing</keyword>
<keyword id="KW-0527">Neuropeptide</keyword>
<keyword id="KW-0964">Secreted</keyword>
<proteinExistence type="evidence at protein level"/>
<protein>
    <recommendedName>
        <fullName evidence="3">Periviscerokinin-3</fullName>
        <shortName evidence="3">PerRu-PVK-3</shortName>
    </recommendedName>
</protein>
<evidence type="ECO:0000255" key="1"/>
<evidence type="ECO:0000269" key="2">
    <source>
    </source>
</evidence>
<evidence type="ECO:0000303" key="3">
    <source>
    </source>
</evidence>
<evidence type="ECO:0000305" key="4"/>
<reference evidence="4" key="1">
    <citation type="journal article" date="2009" name="BMC Evol. Biol.">
        <title>A proteomic approach for studying insect phylogeny: CAPA peptides of ancient insect taxa (Dictyoptera, Blattoptera) as a test case.</title>
        <authorList>
            <person name="Roth S."/>
            <person name="Fromm B."/>
            <person name="Gaede G."/>
            <person name="Predel R."/>
        </authorList>
    </citation>
    <scope>PROTEIN SEQUENCE</scope>
    <scope>AMIDATION AT VAL-11</scope>
    <source>
        <tissue evidence="2">Abdominal perisympathetic organs</tissue>
    </source>
</reference>
<name>PVK3_PERRU</name>
<feature type="peptide" id="PRO_0000378846" description="Periviscerokinin-3" evidence="2">
    <location>
        <begin position="1"/>
        <end position="11"/>
    </location>
</feature>
<feature type="modified residue" description="Valine amide" evidence="2">
    <location>
        <position position="11"/>
    </location>
</feature>
<organism>
    <name type="scientific">Perisphaeria ruficornis</name>
    <name type="common">Cockroach</name>
    <dbReference type="NCBI Taxonomy" id="521516"/>
    <lineage>
        <taxon>Eukaryota</taxon>
        <taxon>Metazoa</taxon>
        <taxon>Ecdysozoa</taxon>
        <taxon>Arthropoda</taxon>
        <taxon>Hexapoda</taxon>
        <taxon>Insecta</taxon>
        <taxon>Pterygota</taxon>
        <taxon>Neoptera</taxon>
        <taxon>Polyneoptera</taxon>
        <taxon>Dictyoptera</taxon>
        <taxon>Blattodea</taxon>
        <taxon>Blaberoidea</taxon>
        <taxon>Blaberidae</taxon>
        <taxon>Perisphaerinae</taxon>
        <taxon>Perisphaeria</taxon>
    </lineage>
</organism>
<comment type="function">
    <text evidence="4">Mediates visceral muscle contractile activity (myotropic activity).</text>
</comment>
<comment type="subcellular location">
    <subcellularLocation>
        <location evidence="4">Secreted</location>
    </subcellularLocation>
</comment>
<comment type="similarity">
    <text evidence="1">Belongs to the periviscerokinin family.</text>
</comment>
<sequence length="11" mass="1129">GSSGLIPFPRV</sequence>
<dbReference type="GO" id="GO:0005576">
    <property type="term" value="C:extracellular region"/>
    <property type="evidence" value="ECO:0007669"/>
    <property type="project" value="UniProtKB-SubCell"/>
</dbReference>
<dbReference type="GO" id="GO:0007218">
    <property type="term" value="P:neuropeptide signaling pathway"/>
    <property type="evidence" value="ECO:0007669"/>
    <property type="project" value="UniProtKB-KW"/>
</dbReference>
<dbReference type="InterPro" id="IPR013231">
    <property type="entry name" value="Periviscerokinin"/>
</dbReference>
<dbReference type="Pfam" id="PF08259">
    <property type="entry name" value="Periviscerokin"/>
    <property type="match status" value="1"/>
</dbReference>
<accession>P85719</accession>